<dbReference type="EC" id="3.6.5.n1" evidence="1"/>
<dbReference type="EMBL" id="BX897699">
    <property type="protein sequence ID" value="CAF26887.1"/>
    <property type="molecule type" value="Genomic_DNA"/>
</dbReference>
<dbReference type="RefSeq" id="WP_011180032.1">
    <property type="nucleotide sequence ID" value="NZ_LRIJ02000001.1"/>
</dbReference>
<dbReference type="SMR" id="Q6G550"/>
<dbReference type="PaxDb" id="283166-BH00710"/>
<dbReference type="EnsemblBacteria" id="CAF26887">
    <property type="protein sequence ID" value="CAF26887"/>
    <property type="gene ID" value="BH00710"/>
</dbReference>
<dbReference type="GeneID" id="92986357"/>
<dbReference type="KEGG" id="bhe:BH00710"/>
<dbReference type="eggNOG" id="COG0481">
    <property type="taxonomic scope" value="Bacteria"/>
</dbReference>
<dbReference type="OrthoDB" id="9802948at2"/>
<dbReference type="Proteomes" id="UP000000421">
    <property type="component" value="Chromosome"/>
</dbReference>
<dbReference type="GO" id="GO:0005886">
    <property type="term" value="C:plasma membrane"/>
    <property type="evidence" value="ECO:0007669"/>
    <property type="project" value="UniProtKB-SubCell"/>
</dbReference>
<dbReference type="GO" id="GO:0005525">
    <property type="term" value="F:GTP binding"/>
    <property type="evidence" value="ECO:0007669"/>
    <property type="project" value="UniProtKB-UniRule"/>
</dbReference>
<dbReference type="GO" id="GO:0003924">
    <property type="term" value="F:GTPase activity"/>
    <property type="evidence" value="ECO:0007669"/>
    <property type="project" value="UniProtKB-UniRule"/>
</dbReference>
<dbReference type="GO" id="GO:0097216">
    <property type="term" value="F:guanosine tetraphosphate binding"/>
    <property type="evidence" value="ECO:0007669"/>
    <property type="project" value="UniProtKB-ARBA"/>
</dbReference>
<dbReference type="GO" id="GO:0043022">
    <property type="term" value="F:ribosome binding"/>
    <property type="evidence" value="ECO:0007669"/>
    <property type="project" value="UniProtKB-UniRule"/>
</dbReference>
<dbReference type="GO" id="GO:0003746">
    <property type="term" value="F:translation elongation factor activity"/>
    <property type="evidence" value="ECO:0007669"/>
    <property type="project" value="UniProtKB-UniRule"/>
</dbReference>
<dbReference type="GO" id="GO:0045727">
    <property type="term" value="P:positive regulation of translation"/>
    <property type="evidence" value="ECO:0007669"/>
    <property type="project" value="UniProtKB-UniRule"/>
</dbReference>
<dbReference type="CDD" id="cd03699">
    <property type="entry name" value="EF4_II"/>
    <property type="match status" value="1"/>
</dbReference>
<dbReference type="CDD" id="cd16260">
    <property type="entry name" value="EF4_III"/>
    <property type="match status" value="1"/>
</dbReference>
<dbReference type="CDD" id="cd01890">
    <property type="entry name" value="LepA"/>
    <property type="match status" value="1"/>
</dbReference>
<dbReference type="CDD" id="cd03709">
    <property type="entry name" value="lepA_C"/>
    <property type="match status" value="1"/>
</dbReference>
<dbReference type="FunFam" id="3.40.50.300:FF:000078">
    <property type="entry name" value="Elongation factor 4"/>
    <property type="match status" value="1"/>
</dbReference>
<dbReference type="FunFam" id="2.40.30.10:FF:000015">
    <property type="entry name" value="Translation factor GUF1, mitochondrial"/>
    <property type="match status" value="1"/>
</dbReference>
<dbReference type="FunFam" id="3.30.70.240:FF:000007">
    <property type="entry name" value="Translation factor GUF1, mitochondrial"/>
    <property type="match status" value="1"/>
</dbReference>
<dbReference type="FunFam" id="3.30.70.2570:FF:000001">
    <property type="entry name" value="Translation factor GUF1, mitochondrial"/>
    <property type="match status" value="1"/>
</dbReference>
<dbReference type="FunFam" id="3.30.70.870:FF:000004">
    <property type="entry name" value="Translation factor GUF1, mitochondrial"/>
    <property type="match status" value="1"/>
</dbReference>
<dbReference type="Gene3D" id="3.30.70.240">
    <property type="match status" value="1"/>
</dbReference>
<dbReference type="Gene3D" id="3.30.70.2570">
    <property type="entry name" value="Elongation factor 4, C-terminal domain"/>
    <property type="match status" value="1"/>
</dbReference>
<dbReference type="Gene3D" id="3.30.70.870">
    <property type="entry name" value="Elongation Factor G (Translational Gtpase), domain 3"/>
    <property type="match status" value="1"/>
</dbReference>
<dbReference type="Gene3D" id="3.40.50.300">
    <property type="entry name" value="P-loop containing nucleotide triphosphate hydrolases"/>
    <property type="match status" value="1"/>
</dbReference>
<dbReference type="Gene3D" id="2.40.30.10">
    <property type="entry name" value="Translation factors"/>
    <property type="match status" value="1"/>
</dbReference>
<dbReference type="HAMAP" id="MF_00071">
    <property type="entry name" value="LepA"/>
    <property type="match status" value="1"/>
</dbReference>
<dbReference type="InterPro" id="IPR006297">
    <property type="entry name" value="EF-4"/>
</dbReference>
<dbReference type="InterPro" id="IPR035647">
    <property type="entry name" value="EFG_III/V"/>
</dbReference>
<dbReference type="InterPro" id="IPR000640">
    <property type="entry name" value="EFG_V-like"/>
</dbReference>
<dbReference type="InterPro" id="IPR004161">
    <property type="entry name" value="EFTu-like_2"/>
</dbReference>
<dbReference type="InterPro" id="IPR031157">
    <property type="entry name" value="G_TR_CS"/>
</dbReference>
<dbReference type="InterPro" id="IPR038363">
    <property type="entry name" value="LepA_C_sf"/>
</dbReference>
<dbReference type="InterPro" id="IPR013842">
    <property type="entry name" value="LepA_CTD"/>
</dbReference>
<dbReference type="InterPro" id="IPR035654">
    <property type="entry name" value="LepA_IV"/>
</dbReference>
<dbReference type="InterPro" id="IPR027417">
    <property type="entry name" value="P-loop_NTPase"/>
</dbReference>
<dbReference type="InterPro" id="IPR005225">
    <property type="entry name" value="Small_GTP-bd"/>
</dbReference>
<dbReference type="InterPro" id="IPR000795">
    <property type="entry name" value="T_Tr_GTP-bd_dom"/>
</dbReference>
<dbReference type="NCBIfam" id="TIGR01393">
    <property type="entry name" value="lepA"/>
    <property type="match status" value="1"/>
</dbReference>
<dbReference type="NCBIfam" id="TIGR00231">
    <property type="entry name" value="small_GTP"/>
    <property type="match status" value="1"/>
</dbReference>
<dbReference type="PANTHER" id="PTHR43512:SF4">
    <property type="entry name" value="TRANSLATION FACTOR GUF1 HOMOLOG, CHLOROPLASTIC"/>
    <property type="match status" value="1"/>
</dbReference>
<dbReference type="PANTHER" id="PTHR43512">
    <property type="entry name" value="TRANSLATION FACTOR GUF1-RELATED"/>
    <property type="match status" value="1"/>
</dbReference>
<dbReference type="Pfam" id="PF00679">
    <property type="entry name" value="EFG_C"/>
    <property type="match status" value="1"/>
</dbReference>
<dbReference type="Pfam" id="PF00009">
    <property type="entry name" value="GTP_EFTU"/>
    <property type="match status" value="1"/>
</dbReference>
<dbReference type="Pfam" id="PF03144">
    <property type="entry name" value="GTP_EFTU_D2"/>
    <property type="match status" value="1"/>
</dbReference>
<dbReference type="Pfam" id="PF06421">
    <property type="entry name" value="LepA_C"/>
    <property type="match status" value="1"/>
</dbReference>
<dbReference type="PRINTS" id="PR00315">
    <property type="entry name" value="ELONGATNFCT"/>
</dbReference>
<dbReference type="SUPFAM" id="SSF54980">
    <property type="entry name" value="EF-G C-terminal domain-like"/>
    <property type="match status" value="2"/>
</dbReference>
<dbReference type="SUPFAM" id="SSF52540">
    <property type="entry name" value="P-loop containing nucleoside triphosphate hydrolases"/>
    <property type="match status" value="1"/>
</dbReference>
<dbReference type="PROSITE" id="PS00301">
    <property type="entry name" value="G_TR_1"/>
    <property type="match status" value="1"/>
</dbReference>
<dbReference type="PROSITE" id="PS51722">
    <property type="entry name" value="G_TR_2"/>
    <property type="match status" value="1"/>
</dbReference>
<proteinExistence type="inferred from homology"/>
<reference key="1">
    <citation type="journal article" date="2004" name="Proc. Natl. Acad. Sci. U.S.A.">
        <title>The louse-borne human pathogen Bartonella quintana is a genomic derivative of the zoonotic agent Bartonella henselae.</title>
        <authorList>
            <person name="Alsmark U.C.M."/>
            <person name="Frank A.C."/>
            <person name="Karlberg E.O."/>
            <person name="Legault B.-A."/>
            <person name="Ardell D.H."/>
            <person name="Canbaeck B."/>
            <person name="Eriksson A.-S."/>
            <person name="Naeslund A.K."/>
            <person name="Handley S.A."/>
            <person name="Huvet M."/>
            <person name="La Scola B."/>
            <person name="Holmberg M."/>
            <person name="Andersson S.G.E."/>
        </authorList>
    </citation>
    <scope>NUCLEOTIDE SEQUENCE [LARGE SCALE GENOMIC DNA]</scope>
    <source>
        <strain>ATCC 49882 / DSM 28221 / CCUG 30454 / Houston 1</strain>
    </source>
</reference>
<sequence>MTVDRNYIRNFSIVAHIDHGKSTLADRLIQMTGGLETREMKEQVLDSMDIERERGITIKAQTVRLHYKAKNGETYILNLIDTPGHVDFAYEVSRSLAACEGSLLVVDASQGVEAQTLANVYQAIDNSHELVVVLNKVDLPAAEPERVKEQIEDVIGIDTSEAVEISAKTGLGVSDVLEAIVTQLPSPRTGDVNKPLKAMLVDSWYDAYLGVIVLVRVIDGILKKGQIIRMMGTGAKYPVERVGVFTPKMIQVDELGPGEIGFITASIKEVADTRVGDTITEERCPCEEALPGFKPAQPVVFCGLFPIDAADFDDLRAAMGKLRLNDASFSFEVETSAALGFGFRCGFLGLLHLEIIQERLEREFNLDLIATAPSVVYRMNMHDGSVKELHNPADMPDIVKISSIEEPWIRATIMTPDNYLGSVLELCQERRGIQVSLSYVGTRAMVTYDLPLNEVVFDFYDRLKSISKGYASFDYQMRDYTEGDLVKMSILVNGESIDALSMLVHRTIAEKRGRSLCEKLKDLIPQHMFQIPIQAAIGGKIIARETIRALRKDVTAKCYGGDVTRKRKLLEKQKEGKKRMRQFGKVEIPQSAFIQALKMNK</sequence>
<evidence type="ECO:0000255" key="1">
    <source>
        <dbReference type="HAMAP-Rule" id="MF_00071"/>
    </source>
</evidence>
<keyword id="KW-0997">Cell inner membrane</keyword>
<keyword id="KW-1003">Cell membrane</keyword>
<keyword id="KW-0342">GTP-binding</keyword>
<keyword id="KW-0378">Hydrolase</keyword>
<keyword id="KW-0472">Membrane</keyword>
<keyword id="KW-0547">Nucleotide-binding</keyword>
<keyword id="KW-0648">Protein biosynthesis</keyword>
<accession>Q6G550</accession>
<comment type="function">
    <text evidence="1">Required for accurate and efficient protein synthesis under certain stress conditions. May act as a fidelity factor of the translation reaction, by catalyzing a one-codon backward translocation of tRNAs on improperly translocated ribosomes. Back-translocation proceeds from a post-translocation (POST) complex to a pre-translocation (PRE) complex, thus giving elongation factor G a second chance to translocate the tRNAs correctly. Binds to ribosomes in a GTP-dependent manner.</text>
</comment>
<comment type="catalytic activity">
    <reaction evidence="1">
        <text>GTP + H2O = GDP + phosphate + H(+)</text>
        <dbReference type="Rhea" id="RHEA:19669"/>
        <dbReference type="ChEBI" id="CHEBI:15377"/>
        <dbReference type="ChEBI" id="CHEBI:15378"/>
        <dbReference type="ChEBI" id="CHEBI:37565"/>
        <dbReference type="ChEBI" id="CHEBI:43474"/>
        <dbReference type="ChEBI" id="CHEBI:58189"/>
        <dbReference type="EC" id="3.6.5.n1"/>
    </reaction>
</comment>
<comment type="subcellular location">
    <subcellularLocation>
        <location evidence="1">Cell inner membrane</location>
        <topology evidence="1">Peripheral membrane protein</topology>
        <orientation evidence="1">Cytoplasmic side</orientation>
    </subcellularLocation>
</comment>
<comment type="similarity">
    <text evidence="1">Belongs to the TRAFAC class translation factor GTPase superfamily. Classic translation factor GTPase family. LepA subfamily.</text>
</comment>
<protein>
    <recommendedName>
        <fullName evidence="1">Elongation factor 4</fullName>
        <shortName evidence="1">EF-4</shortName>
        <ecNumber evidence="1">3.6.5.n1</ecNumber>
    </recommendedName>
    <alternativeName>
        <fullName evidence="1">Ribosomal back-translocase LepA</fullName>
    </alternativeName>
</protein>
<name>LEPA_BARHE</name>
<gene>
    <name evidence="1" type="primary">lepA</name>
    <name type="ordered locus">BH00710</name>
</gene>
<feature type="chain" id="PRO_0000176234" description="Elongation factor 4">
    <location>
        <begin position="1"/>
        <end position="601"/>
    </location>
</feature>
<feature type="domain" description="tr-type G">
    <location>
        <begin position="6"/>
        <end position="188"/>
    </location>
</feature>
<feature type="binding site" evidence="1">
    <location>
        <begin position="18"/>
        <end position="23"/>
    </location>
    <ligand>
        <name>GTP</name>
        <dbReference type="ChEBI" id="CHEBI:37565"/>
    </ligand>
</feature>
<feature type="binding site" evidence="1">
    <location>
        <begin position="135"/>
        <end position="138"/>
    </location>
    <ligand>
        <name>GTP</name>
        <dbReference type="ChEBI" id="CHEBI:37565"/>
    </ligand>
</feature>
<organism>
    <name type="scientific">Bartonella henselae (strain ATCC 49882 / DSM 28221 / CCUG 30454 / Houston 1)</name>
    <name type="common">Rochalimaea henselae</name>
    <dbReference type="NCBI Taxonomy" id="283166"/>
    <lineage>
        <taxon>Bacteria</taxon>
        <taxon>Pseudomonadati</taxon>
        <taxon>Pseudomonadota</taxon>
        <taxon>Alphaproteobacteria</taxon>
        <taxon>Hyphomicrobiales</taxon>
        <taxon>Bartonellaceae</taxon>
        <taxon>Bartonella</taxon>
    </lineage>
</organism>